<organism>
    <name type="scientific">Chlamydia abortus (strain DSM 27085 / S26/3)</name>
    <name type="common">Chlamydophila abortus</name>
    <dbReference type="NCBI Taxonomy" id="218497"/>
    <lineage>
        <taxon>Bacteria</taxon>
        <taxon>Pseudomonadati</taxon>
        <taxon>Chlamydiota</taxon>
        <taxon>Chlamydiia</taxon>
        <taxon>Chlamydiales</taxon>
        <taxon>Chlamydiaceae</taxon>
        <taxon>Chlamydia/Chlamydophila group</taxon>
        <taxon>Chlamydia</taxon>
    </lineage>
</organism>
<comment type="function">
    <text evidence="1">Catalyzes the base-exchange of a guanine (G) residue with the queuine precursor 7-aminomethyl-7-deazaguanine (PreQ1) at position 34 (anticodon wobble position) in tRNAs with GU(N) anticodons (tRNA-Asp, -Asn, -His and -Tyr). Catalysis occurs through a double-displacement mechanism. The nucleophile active site attacks the C1' of nucleotide 34 to detach the guanine base from the RNA, forming a covalent enzyme-RNA intermediate. The proton acceptor active site deprotonates the incoming PreQ1, allowing a nucleophilic attack on the C1' of the ribose to form the product. After dissociation, two additional enzymatic reactions on the tRNA convert PreQ1 to queuine (Q), resulting in the hypermodified nucleoside queuosine (7-(((4,5-cis-dihydroxy-2-cyclopenten-1-yl)amino)methyl)-7-deazaguanosine).</text>
</comment>
<comment type="catalytic activity">
    <reaction evidence="1">
        <text>7-aminomethyl-7-carbaguanine + guanosine(34) in tRNA = 7-aminomethyl-7-carbaguanosine(34) in tRNA + guanine</text>
        <dbReference type="Rhea" id="RHEA:24104"/>
        <dbReference type="Rhea" id="RHEA-COMP:10341"/>
        <dbReference type="Rhea" id="RHEA-COMP:10342"/>
        <dbReference type="ChEBI" id="CHEBI:16235"/>
        <dbReference type="ChEBI" id="CHEBI:58703"/>
        <dbReference type="ChEBI" id="CHEBI:74269"/>
        <dbReference type="ChEBI" id="CHEBI:82833"/>
        <dbReference type="EC" id="2.4.2.29"/>
    </reaction>
</comment>
<comment type="cofactor">
    <cofactor evidence="1">
        <name>Zn(2+)</name>
        <dbReference type="ChEBI" id="CHEBI:29105"/>
    </cofactor>
    <text evidence="1">Binds 1 zinc ion per subunit.</text>
</comment>
<comment type="pathway">
    <text evidence="1">tRNA modification; tRNA-queuosine biosynthesis.</text>
</comment>
<comment type="subunit">
    <text evidence="1">Homodimer. Within each dimer, one monomer is responsible for RNA recognition and catalysis, while the other monomer binds to the replacement base PreQ1.</text>
</comment>
<comment type="similarity">
    <text evidence="1">Belongs to the queuine tRNA-ribosyltransferase family.</text>
</comment>
<reference key="1">
    <citation type="journal article" date="2005" name="Genome Res.">
        <title>The Chlamydophila abortus genome sequence reveals an array of variable proteins that contribute to interspecies variation.</title>
        <authorList>
            <person name="Thomson N.R."/>
            <person name="Yeats C."/>
            <person name="Bell K."/>
            <person name="Holden M.T.G."/>
            <person name="Bentley S.D."/>
            <person name="Livingstone M."/>
            <person name="Cerdeno-Tarraga A.-M."/>
            <person name="Harris B."/>
            <person name="Doggett J."/>
            <person name="Ormond D."/>
            <person name="Mungall K."/>
            <person name="Clarke K."/>
            <person name="Feltwell T."/>
            <person name="Hance Z."/>
            <person name="Sanders M."/>
            <person name="Quail M.A."/>
            <person name="Price C."/>
            <person name="Barrell B.G."/>
            <person name="Parkhill J."/>
            <person name="Longbottom D."/>
        </authorList>
    </citation>
    <scope>NUCLEOTIDE SEQUENCE [LARGE SCALE GENOMIC DNA]</scope>
    <source>
        <strain>DSM 27085 / S26/3</strain>
    </source>
</reference>
<feature type="chain" id="PRO_1000016773" description="Queuine tRNA-ribosyltransferase">
    <location>
        <begin position="1"/>
        <end position="372"/>
    </location>
</feature>
<feature type="region of interest" description="RNA binding" evidence="1">
    <location>
        <begin position="262"/>
        <end position="268"/>
    </location>
</feature>
<feature type="region of interest" description="RNA binding; important for wobble base 34 recognition" evidence="1">
    <location>
        <begin position="286"/>
        <end position="290"/>
    </location>
</feature>
<feature type="active site" description="Proton acceptor" evidence="1">
    <location>
        <position position="89"/>
    </location>
</feature>
<feature type="active site" description="Nucleophile" evidence="1">
    <location>
        <position position="281"/>
    </location>
</feature>
<feature type="binding site" evidence="1">
    <location>
        <begin position="89"/>
        <end position="93"/>
    </location>
    <ligand>
        <name>substrate</name>
    </ligand>
</feature>
<feature type="binding site" evidence="1">
    <location>
        <position position="161"/>
    </location>
    <ligand>
        <name>substrate</name>
    </ligand>
</feature>
<feature type="binding site" evidence="1">
    <location>
        <position position="232"/>
    </location>
    <ligand>
        <name>substrate</name>
    </ligand>
</feature>
<feature type="binding site" evidence="1">
    <location>
        <position position="319"/>
    </location>
    <ligand>
        <name>Zn(2+)</name>
        <dbReference type="ChEBI" id="CHEBI:29105"/>
    </ligand>
</feature>
<feature type="binding site" evidence="1">
    <location>
        <position position="321"/>
    </location>
    <ligand>
        <name>Zn(2+)</name>
        <dbReference type="ChEBI" id="CHEBI:29105"/>
    </ligand>
</feature>
<feature type="binding site" evidence="1">
    <location>
        <position position="324"/>
    </location>
    <ligand>
        <name>Zn(2+)</name>
        <dbReference type="ChEBI" id="CHEBI:29105"/>
    </ligand>
</feature>
<feature type="binding site" evidence="1">
    <location>
        <position position="351"/>
    </location>
    <ligand>
        <name>Zn(2+)</name>
        <dbReference type="ChEBI" id="CHEBI:29105"/>
    </ligand>
</feature>
<name>TGT_CHLAB</name>
<gene>
    <name evidence="1" type="primary">tgt</name>
    <name type="ordered locus">CAB559</name>
</gene>
<accession>Q5L5T1</accession>
<keyword id="KW-0328">Glycosyltransferase</keyword>
<keyword id="KW-0479">Metal-binding</keyword>
<keyword id="KW-0671">Queuosine biosynthesis</keyword>
<keyword id="KW-0808">Transferase</keyword>
<keyword id="KW-0819">tRNA processing</keyword>
<keyword id="KW-0862">Zinc</keyword>
<protein>
    <recommendedName>
        <fullName evidence="1">Queuine tRNA-ribosyltransferase</fullName>
        <ecNumber evidence="1">2.4.2.29</ecNumber>
    </recommendedName>
    <alternativeName>
        <fullName evidence="1">Guanine insertion enzyme</fullName>
    </alternativeName>
    <alternativeName>
        <fullName evidence="1">tRNA-guanine transglycosylase</fullName>
    </alternativeName>
</protein>
<sequence>MALKFHVLHQSKKSRARVGRIETAHGIIDTPAFVPVATNGALKGVVDHSNIQLMFCNTYHLLVHPGTEAIAAMGGLHKFIHRNSPIITDSGGFQIFSLAYGSVAEEIKSCGKKKGSSSILEVTDEGVWFKSYRDGSKLFLSPEVSVQAQKDLGADIIIPLDELLPFHSDTTYFLSSCARTYVWEKRSLDYHKKDPRHQSMYGVIHGGIDPKQRKIGCAFVEDHPFDGFAIGGSLGRNLNEMVPIVDITTSYLSKDRPVHLLGIGDLPSIQATIGFGIDSFDSSYPTKAARHGLILSSQGPIKIANQAYTNDLSPIDPECTCLTCTSKISRAYLRHLFKVHEPNASIWASIHNLHYMQEFMKNIREQILHDRI</sequence>
<proteinExistence type="inferred from homology"/>
<dbReference type="EC" id="2.4.2.29" evidence="1"/>
<dbReference type="EMBL" id="CR848038">
    <property type="protein sequence ID" value="CAH64006.1"/>
    <property type="molecule type" value="Genomic_DNA"/>
</dbReference>
<dbReference type="RefSeq" id="WP_011097161.1">
    <property type="nucleotide sequence ID" value="NC_004552.2"/>
</dbReference>
<dbReference type="SMR" id="Q5L5T1"/>
<dbReference type="KEGG" id="cab:CAB559"/>
<dbReference type="eggNOG" id="COG0343">
    <property type="taxonomic scope" value="Bacteria"/>
</dbReference>
<dbReference type="HOGENOM" id="CLU_022060_0_2_0"/>
<dbReference type="OrthoDB" id="9805417at2"/>
<dbReference type="UniPathway" id="UPA00392"/>
<dbReference type="Proteomes" id="UP000001012">
    <property type="component" value="Chromosome"/>
</dbReference>
<dbReference type="GO" id="GO:0046872">
    <property type="term" value="F:metal ion binding"/>
    <property type="evidence" value="ECO:0007669"/>
    <property type="project" value="UniProtKB-KW"/>
</dbReference>
<dbReference type="GO" id="GO:0008479">
    <property type="term" value="F:tRNA-guanosine(34) queuine transglycosylase activity"/>
    <property type="evidence" value="ECO:0007669"/>
    <property type="project" value="UniProtKB-UniRule"/>
</dbReference>
<dbReference type="GO" id="GO:0008616">
    <property type="term" value="P:queuosine biosynthetic process"/>
    <property type="evidence" value="ECO:0007669"/>
    <property type="project" value="UniProtKB-UniRule"/>
</dbReference>
<dbReference type="GO" id="GO:0101030">
    <property type="term" value="P:tRNA-guanine transglycosylation"/>
    <property type="evidence" value="ECO:0007669"/>
    <property type="project" value="InterPro"/>
</dbReference>
<dbReference type="Gene3D" id="3.20.20.105">
    <property type="entry name" value="Queuine tRNA-ribosyltransferase-like"/>
    <property type="match status" value="1"/>
</dbReference>
<dbReference type="HAMAP" id="MF_00168">
    <property type="entry name" value="Q_tRNA_Tgt"/>
    <property type="match status" value="1"/>
</dbReference>
<dbReference type="InterPro" id="IPR004803">
    <property type="entry name" value="TGT"/>
</dbReference>
<dbReference type="InterPro" id="IPR036511">
    <property type="entry name" value="TGT-like_sf"/>
</dbReference>
<dbReference type="InterPro" id="IPR002616">
    <property type="entry name" value="tRNA_ribo_trans-like"/>
</dbReference>
<dbReference type="NCBIfam" id="TIGR00430">
    <property type="entry name" value="Q_tRNA_tgt"/>
    <property type="match status" value="1"/>
</dbReference>
<dbReference type="NCBIfam" id="TIGR00449">
    <property type="entry name" value="tgt_general"/>
    <property type="match status" value="1"/>
</dbReference>
<dbReference type="PANTHER" id="PTHR43468">
    <property type="match status" value="1"/>
</dbReference>
<dbReference type="PANTHER" id="PTHR43468:SF1">
    <property type="entry name" value="TRNA-GUANOSINE(34) QUEUINE TRANSGLYCOSYLASE"/>
    <property type="match status" value="1"/>
</dbReference>
<dbReference type="Pfam" id="PF01702">
    <property type="entry name" value="TGT"/>
    <property type="match status" value="1"/>
</dbReference>
<dbReference type="SUPFAM" id="SSF51713">
    <property type="entry name" value="tRNA-guanine transglycosylase"/>
    <property type="match status" value="1"/>
</dbReference>
<evidence type="ECO:0000255" key="1">
    <source>
        <dbReference type="HAMAP-Rule" id="MF_00168"/>
    </source>
</evidence>